<protein>
    <recommendedName>
        <fullName evidence="1">Protein-export protein SecB</fullName>
    </recommendedName>
</protein>
<gene>
    <name evidence="1" type="primary">secB</name>
    <name type="ordered locus">BCAN_A2118</name>
</gene>
<organism>
    <name type="scientific">Brucella canis (strain ATCC 23365 / NCTC 10854 / RM-666)</name>
    <dbReference type="NCBI Taxonomy" id="483179"/>
    <lineage>
        <taxon>Bacteria</taxon>
        <taxon>Pseudomonadati</taxon>
        <taxon>Pseudomonadota</taxon>
        <taxon>Alphaproteobacteria</taxon>
        <taxon>Hyphomicrobiales</taxon>
        <taxon>Brucellaceae</taxon>
        <taxon>Brucella/Ochrobactrum group</taxon>
        <taxon>Brucella</taxon>
    </lineage>
</organism>
<feature type="chain" id="PRO_1000083852" description="Protein-export protein SecB">
    <location>
        <begin position="1"/>
        <end position="163"/>
    </location>
</feature>
<sequence>MSDKAAGETKNGNGATTEPSLNILAQYVKDLSFESPGAPLSLRPREKAPSININVNVNANPLSETDFDVVLTLEAKAVDGKDILFNTELVYGGVFRIQGIPQEHMLPLLFIECPRLLFPFARQIIADATRNGGYPPLMIDPIDFAQMFQQRMAEEQAESAVKS</sequence>
<accession>A9M9Q7</accession>
<comment type="function">
    <text evidence="1">One of the proteins required for the normal export of preproteins out of the cell cytoplasm. It is a molecular chaperone that binds to a subset of precursor proteins, maintaining them in a translocation-competent state. It also specifically binds to its receptor SecA.</text>
</comment>
<comment type="subunit">
    <text evidence="1">Homotetramer, a dimer of dimers. One homotetramer interacts with 1 SecA dimer.</text>
</comment>
<comment type="subcellular location">
    <subcellularLocation>
        <location evidence="1">Cytoplasm</location>
    </subcellularLocation>
</comment>
<comment type="similarity">
    <text evidence="1">Belongs to the SecB family.</text>
</comment>
<keyword id="KW-0143">Chaperone</keyword>
<keyword id="KW-0963">Cytoplasm</keyword>
<keyword id="KW-0653">Protein transport</keyword>
<keyword id="KW-1185">Reference proteome</keyword>
<keyword id="KW-0811">Translocation</keyword>
<keyword id="KW-0813">Transport</keyword>
<reference key="1">
    <citation type="submission" date="2007-10" db="EMBL/GenBank/DDBJ databases">
        <title>Brucella canis ATCC 23365 whole genome shotgun sequencing project.</title>
        <authorList>
            <person name="Setubal J.C."/>
            <person name="Bowns C."/>
            <person name="Boyle S."/>
            <person name="Crasta O.R."/>
            <person name="Czar M.J."/>
            <person name="Dharmanolla C."/>
            <person name="Gillespie J.J."/>
            <person name="Kenyon R.W."/>
            <person name="Lu J."/>
            <person name="Mane S."/>
            <person name="Mohapatra S."/>
            <person name="Nagrani S."/>
            <person name="Purkayastha A."/>
            <person name="Rajasimha H.K."/>
            <person name="Shallom J.M."/>
            <person name="Shallom S."/>
            <person name="Shukla M."/>
            <person name="Snyder E.E."/>
            <person name="Sobral B.W."/>
            <person name="Wattam A.R."/>
            <person name="Will R."/>
            <person name="Williams K."/>
            <person name="Yoo H."/>
            <person name="Bruce D."/>
            <person name="Detter C."/>
            <person name="Munk C."/>
            <person name="Brettin T.S."/>
        </authorList>
    </citation>
    <scope>NUCLEOTIDE SEQUENCE [LARGE SCALE GENOMIC DNA]</scope>
    <source>
        <strain>ATCC 23365 / NCTC 10854 / RM-666</strain>
    </source>
</reference>
<evidence type="ECO:0000255" key="1">
    <source>
        <dbReference type="HAMAP-Rule" id="MF_00821"/>
    </source>
</evidence>
<dbReference type="EMBL" id="CP000872">
    <property type="protein sequence ID" value="ABX63102.1"/>
    <property type="molecule type" value="Genomic_DNA"/>
</dbReference>
<dbReference type="RefSeq" id="WP_004691153.1">
    <property type="nucleotide sequence ID" value="NC_010103.1"/>
</dbReference>
<dbReference type="SMR" id="A9M9Q7"/>
<dbReference type="GeneID" id="55591642"/>
<dbReference type="KEGG" id="bcs:BCAN_A2118"/>
<dbReference type="HOGENOM" id="CLU_111574_0_0_5"/>
<dbReference type="PhylomeDB" id="A9M9Q7"/>
<dbReference type="Proteomes" id="UP000001385">
    <property type="component" value="Chromosome I"/>
</dbReference>
<dbReference type="GO" id="GO:0005737">
    <property type="term" value="C:cytoplasm"/>
    <property type="evidence" value="ECO:0007669"/>
    <property type="project" value="UniProtKB-SubCell"/>
</dbReference>
<dbReference type="GO" id="GO:0051082">
    <property type="term" value="F:unfolded protein binding"/>
    <property type="evidence" value="ECO:0007669"/>
    <property type="project" value="InterPro"/>
</dbReference>
<dbReference type="GO" id="GO:0006457">
    <property type="term" value="P:protein folding"/>
    <property type="evidence" value="ECO:0007669"/>
    <property type="project" value="UniProtKB-UniRule"/>
</dbReference>
<dbReference type="GO" id="GO:0051262">
    <property type="term" value="P:protein tetramerization"/>
    <property type="evidence" value="ECO:0007669"/>
    <property type="project" value="InterPro"/>
</dbReference>
<dbReference type="GO" id="GO:0015031">
    <property type="term" value="P:protein transport"/>
    <property type="evidence" value="ECO:0007669"/>
    <property type="project" value="UniProtKB-UniRule"/>
</dbReference>
<dbReference type="Gene3D" id="3.10.420.10">
    <property type="entry name" value="SecB-like"/>
    <property type="match status" value="1"/>
</dbReference>
<dbReference type="HAMAP" id="MF_00821">
    <property type="entry name" value="SecB"/>
    <property type="match status" value="1"/>
</dbReference>
<dbReference type="InterPro" id="IPR003708">
    <property type="entry name" value="SecB"/>
</dbReference>
<dbReference type="InterPro" id="IPR035958">
    <property type="entry name" value="SecB-like_sf"/>
</dbReference>
<dbReference type="NCBIfam" id="NF004392">
    <property type="entry name" value="PRK05751.1-3"/>
    <property type="match status" value="1"/>
</dbReference>
<dbReference type="NCBIfam" id="TIGR00809">
    <property type="entry name" value="secB"/>
    <property type="match status" value="1"/>
</dbReference>
<dbReference type="PANTHER" id="PTHR36918">
    <property type="match status" value="1"/>
</dbReference>
<dbReference type="PANTHER" id="PTHR36918:SF1">
    <property type="entry name" value="PROTEIN-EXPORT PROTEIN SECB"/>
    <property type="match status" value="1"/>
</dbReference>
<dbReference type="Pfam" id="PF02556">
    <property type="entry name" value="SecB"/>
    <property type="match status" value="1"/>
</dbReference>
<dbReference type="PRINTS" id="PR01594">
    <property type="entry name" value="SECBCHAPRONE"/>
</dbReference>
<dbReference type="SUPFAM" id="SSF54611">
    <property type="entry name" value="SecB-like"/>
    <property type="match status" value="1"/>
</dbReference>
<name>SECB_BRUC2</name>
<proteinExistence type="inferred from homology"/>